<comment type="function">
    <text evidence="1">One of the components of the core complex of photosystem II (PSII). PSII is a light-driven water:plastoquinone oxidoreductase that uses light energy to abstract electrons from H(2)O, generating O(2) and a proton gradient subsequently used for ATP formation. It consists of a core antenna complex that captures photons, and an electron transfer chain that converts photonic excitation into a charge separation. This subunit is found at the monomer-monomer interface and is required for correct PSII assembly and/or dimerization.</text>
</comment>
<comment type="subunit">
    <text evidence="1">PSII is composed of 1 copy each of membrane proteins PsbA, PsbB, PsbC, PsbD, PsbE, PsbF, PsbH, PsbI, PsbJ, PsbK, PsbL, PsbM, PsbT, PsbX, PsbY, PsbZ, Psb30/Ycf12, at least 3 peripheral proteins of the oxygen-evolving complex and a large number of cofactors. It forms dimeric complexes.</text>
</comment>
<comment type="subcellular location">
    <subcellularLocation>
        <location evidence="1">Plastid</location>
        <location evidence="1">Chloroplast thylakoid membrane</location>
        <topology evidence="1">Single-pass membrane protein</topology>
    </subcellularLocation>
</comment>
<comment type="similarity">
    <text evidence="1">Belongs to the PsbL family.</text>
</comment>
<organism>
    <name type="scientific">Phaseolus vulgaris</name>
    <name type="common">Kidney bean</name>
    <name type="synonym">French bean</name>
    <dbReference type="NCBI Taxonomy" id="3885"/>
    <lineage>
        <taxon>Eukaryota</taxon>
        <taxon>Viridiplantae</taxon>
        <taxon>Streptophyta</taxon>
        <taxon>Embryophyta</taxon>
        <taxon>Tracheophyta</taxon>
        <taxon>Spermatophyta</taxon>
        <taxon>Magnoliopsida</taxon>
        <taxon>eudicotyledons</taxon>
        <taxon>Gunneridae</taxon>
        <taxon>Pentapetalae</taxon>
        <taxon>rosids</taxon>
        <taxon>fabids</taxon>
        <taxon>Fabales</taxon>
        <taxon>Fabaceae</taxon>
        <taxon>Papilionoideae</taxon>
        <taxon>50 kb inversion clade</taxon>
        <taxon>NPAAA clade</taxon>
        <taxon>indigoferoid/millettioid clade</taxon>
        <taxon>Phaseoleae</taxon>
        <taxon>Phaseolus</taxon>
    </lineage>
</organism>
<gene>
    <name evidence="1" type="primary">psbL</name>
</gene>
<accession>A4GGC1</accession>
<accession>A8W7Z7</accession>
<feature type="chain" id="PRO_0000306241" description="Photosystem II reaction center protein L">
    <location>
        <begin position="1"/>
        <end position="38"/>
    </location>
</feature>
<feature type="transmembrane region" description="Helical" evidence="1">
    <location>
        <begin position="17"/>
        <end position="37"/>
    </location>
</feature>
<sequence>MTQSNPNEQNVELNRTSLYWGLLLIFVLAVLFSNYFFN</sequence>
<name>PSBL_PHAVU</name>
<keyword id="KW-0150">Chloroplast</keyword>
<keyword id="KW-0472">Membrane</keyword>
<keyword id="KW-0602">Photosynthesis</keyword>
<keyword id="KW-0604">Photosystem II</keyword>
<keyword id="KW-0934">Plastid</keyword>
<keyword id="KW-0674">Reaction center</keyword>
<keyword id="KW-0793">Thylakoid</keyword>
<keyword id="KW-0812">Transmembrane</keyword>
<keyword id="KW-1133">Transmembrane helix</keyword>
<proteinExistence type="inferred from homology"/>
<protein>
    <recommendedName>
        <fullName evidence="1">Photosystem II reaction center protein L</fullName>
        <shortName evidence="1">PSII-L</shortName>
    </recommendedName>
</protein>
<evidence type="ECO:0000255" key="1">
    <source>
        <dbReference type="HAMAP-Rule" id="MF_01317"/>
    </source>
</evidence>
<dbReference type="EMBL" id="DQ886273">
    <property type="protein sequence ID" value="ABH88102.1"/>
    <property type="molecule type" value="Genomic_DNA"/>
</dbReference>
<dbReference type="EMBL" id="EU196765">
    <property type="protein sequence ID" value="ABW22767.1"/>
    <property type="molecule type" value="Genomic_DNA"/>
</dbReference>
<dbReference type="RefSeq" id="YP_001122822.1">
    <property type="nucleotide sequence ID" value="NC_009259.1"/>
</dbReference>
<dbReference type="SMR" id="A4GGC1"/>
<dbReference type="GeneID" id="4961809"/>
<dbReference type="KEGG" id="pvu:4961809"/>
<dbReference type="GO" id="GO:0009535">
    <property type="term" value="C:chloroplast thylakoid membrane"/>
    <property type="evidence" value="ECO:0007669"/>
    <property type="project" value="UniProtKB-SubCell"/>
</dbReference>
<dbReference type="GO" id="GO:0009539">
    <property type="term" value="C:photosystem II reaction center"/>
    <property type="evidence" value="ECO:0007669"/>
    <property type="project" value="InterPro"/>
</dbReference>
<dbReference type="GO" id="GO:0015979">
    <property type="term" value="P:photosynthesis"/>
    <property type="evidence" value="ECO:0007669"/>
    <property type="project" value="UniProtKB-UniRule"/>
</dbReference>
<dbReference type="HAMAP" id="MF_01317">
    <property type="entry name" value="PSII_PsbL"/>
    <property type="match status" value="1"/>
</dbReference>
<dbReference type="InterPro" id="IPR003372">
    <property type="entry name" value="PSII_PsbL"/>
</dbReference>
<dbReference type="InterPro" id="IPR037266">
    <property type="entry name" value="PSII_PsbL_sf"/>
</dbReference>
<dbReference type="NCBIfam" id="NF001972">
    <property type="entry name" value="PRK00753.1"/>
    <property type="match status" value="1"/>
</dbReference>
<dbReference type="Pfam" id="PF02419">
    <property type="entry name" value="PsbL"/>
    <property type="match status" value="1"/>
</dbReference>
<dbReference type="SUPFAM" id="SSF161017">
    <property type="entry name" value="Photosystem II reaction center protein L, PsbL"/>
    <property type="match status" value="1"/>
</dbReference>
<reference key="1">
    <citation type="journal article" date="2007" name="BMC Genomics">
        <title>Rapid evolutionary change of common bean (Phaseolus vulgaris L) plastome, and the genomic diversification of legume chloroplasts.</title>
        <authorList>
            <person name="Guo X."/>
            <person name="Castillo-Ramirez S."/>
            <person name="Gonzalez V."/>
            <person name="Bustos P."/>
            <person name="Fernandez-Vazquez J.L."/>
            <person name="Santamaria R.I."/>
            <person name="Arellano J."/>
            <person name="Cevallos M.A."/>
            <person name="Davila G."/>
        </authorList>
    </citation>
    <scope>NUCLEOTIDE SEQUENCE [LARGE SCALE GENOMIC DNA]</scope>
    <source>
        <strain>cv. Negro Jamapa</strain>
    </source>
</reference>
<reference key="2">
    <citation type="submission" date="2007-10" db="EMBL/GenBank/DDBJ databases">
        <title>Complete nucleotide sequence of the plastid genome of the common bean, Phaseolus vulgaris.</title>
        <authorList>
            <person name="Moore M.J."/>
            <person name="Triplett E.W."/>
            <person name="Broughton W.J."/>
            <person name="Soltis P.S."/>
            <person name="Soltis D.E."/>
        </authorList>
    </citation>
    <scope>NUCLEOTIDE SEQUENCE [LARGE SCALE GENOMIC DNA]</scope>
</reference>
<geneLocation type="chloroplast"/>